<organism>
    <name type="scientific">Arabidopsis thaliana</name>
    <name type="common">Mouse-ear cress</name>
    <dbReference type="NCBI Taxonomy" id="3702"/>
    <lineage>
        <taxon>Eukaryota</taxon>
        <taxon>Viridiplantae</taxon>
        <taxon>Streptophyta</taxon>
        <taxon>Embryophyta</taxon>
        <taxon>Tracheophyta</taxon>
        <taxon>Spermatophyta</taxon>
        <taxon>Magnoliopsida</taxon>
        <taxon>eudicotyledons</taxon>
        <taxon>Gunneridae</taxon>
        <taxon>Pentapetalae</taxon>
        <taxon>rosids</taxon>
        <taxon>malvids</taxon>
        <taxon>Brassicales</taxon>
        <taxon>Brassicaceae</taxon>
        <taxon>Camelineae</taxon>
        <taxon>Arabidopsis</taxon>
    </lineage>
</organism>
<sequence length="769" mass="85704">MSSNCSCSLLSLFSLLLIIDLTVASSCPKTCGGIDIPYPFGIGTGCYLEKWYEIICVNNSVPFLSIINREVVSISFSDMYRRFFNVGYGSIRIRNPIASKGCSSGGQEFGSLLNMTGYPFYLGDNNMLIAVGCNNTASLTNVEPSIVGCESTCSTNQDIPINDYLGVLYCNARYGDSEYCKNISIMNDTSCNGIGCCKASLPARYQQIIGVEIDDSNTESKGCKVAFITDEEYFLSNGSDPERLHANGYDTVDLRWFIHTANHSFIGSLGCKSIDEYTILRRDNREYGIGCLCDYNSTTTGYATCSCASGFEGNPYIPGECKDINECVRGIDGNPVCTAGKCVNLLGGYTCEYTNHRPLVIGLSTSFSTLVFIGGIYWLYKFIRRQRRLNQKKKFFKRNGGLLLQQQLTTTEGNVDSTRVFNSRELEKATENFSLTRILGEGGQGTVYKGMLVDGRIVAVKKSKVVDEDKLEEFINEVVILSQINHRNIVKLLGCCLETDVPILVYEFIPNGNLFEHLHDDSDDYTMTTWEVRLRIAVDIAGALSYLHSAASSPIYHRDIKSTNIMLDEKHRAKVSDFGTSRTVTVDHTHLTTVVSGTVGYMDPEYFQSSQFTDKSDVYSFGVVLAELITGEKSVSFLRSQEYRTLATYFTLAMKENRLSDIIDARIRDGCKLNQVTAAAKIARKCLNMKGRKRPSMRQVSMELEKIRSYSEDMQPYEYASENEEEKKETLVDVNVESRNYVSVTAASSQYSIATTSSSRSDVEPLFPR</sequence>
<keyword id="KW-0067">ATP-binding</keyword>
<keyword id="KW-1015">Disulfide bond</keyword>
<keyword id="KW-0325">Glycoprotein</keyword>
<keyword id="KW-0418">Kinase</keyword>
<keyword id="KW-0472">Membrane</keyword>
<keyword id="KW-0547">Nucleotide-binding</keyword>
<keyword id="KW-0597">Phosphoprotein</keyword>
<keyword id="KW-1185">Reference proteome</keyword>
<keyword id="KW-0723">Serine/threonine-protein kinase</keyword>
<keyword id="KW-0732">Signal</keyword>
<keyword id="KW-0808">Transferase</keyword>
<keyword id="KW-0812">Transmembrane</keyword>
<keyword id="KW-1133">Transmembrane helix</keyword>
<accession>Q8VYA3</accession>
<accession>Q9MA08</accession>
<gene>
    <name type="primary">WAKL10</name>
    <name type="ordered locus">At1g79680</name>
    <name type="ORF">F20B17.10</name>
</gene>
<comment type="function">
    <text>Serine/threonine-protein kinase that may function as a signaling receptor of extracellular matrix component.</text>
</comment>
<comment type="catalytic activity">
    <reaction>
        <text>L-seryl-[protein] + ATP = O-phospho-L-seryl-[protein] + ADP + H(+)</text>
        <dbReference type="Rhea" id="RHEA:17989"/>
        <dbReference type="Rhea" id="RHEA-COMP:9863"/>
        <dbReference type="Rhea" id="RHEA-COMP:11604"/>
        <dbReference type="ChEBI" id="CHEBI:15378"/>
        <dbReference type="ChEBI" id="CHEBI:29999"/>
        <dbReference type="ChEBI" id="CHEBI:30616"/>
        <dbReference type="ChEBI" id="CHEBI:83421"/>
        <dbReference type="ChEBI" id="CHEBI:456216"/>
    </reaction>
</comment>
<comment type="catalytic activity">
    <reaction>
        <text>L-threonyl-[protein] + ATP = O-phospho-L-threonyl-[protein] + ADP + H(+)</text>
        <dbReference type="Rhea" id="RHEA:46608"/>
        <dbReference type="Rhea" id="RHEA-COMP:11060"/>
        <dbReference type="Rhea" id="RHEA-COMP:11605"/>
        <dbReference type="ChEBI" id="CHEBI:15378"/>
        <dbReference type="ChEBI" id="CHEBI:30013"/>
        <dbReference type="ChEBI" id="CHEBI:30616"/>
        <dbReference type="ChEBI" id="CHEBI:61977"/>
        <dbReference type="ChEBI" id="CHEBI:456216"/>
    </reaction>
</comment>
<comment type="subcellular location">
    <subcellularLocation>
        <location evidence="6">Membrane</location>
        <topology evidence="6">Single-pass type I membrane protein</topology>
    </subcellularLocation>
</comment>
<comment type="domain">
    <text>The EGF-like region is specific to this family of proteins and seems to consist of the C-terminal of an EGF-like domain fused to the N-terminal of another one.</text>
</comment>
<comment type="similarity">
    <text evidence="4">Belongs to the protein kinase superfamily. Ser/Thr protein kinase family.</text>
</comment>
<comment type="sequence caution" evidence="6">
    <conflict type="erroneous gene model prediction">
        <sequence resource="EMBL-CDS" id="AAF68122"/>
    </conflict>
</comment>
<feature type="signal peptide" evidence="3">
    <location>
        <begin position="1"/>
        <end position="24"/>
    </location>
</feature>
<feature type="chain" id="PRO_0000253314" description="Wall-associated receptor kinase-like 10">
    <location>
        <begin position="25"/>
        <end position="769"/>
    </location>
</feature>
<feature type="topological domain" description="Extracellular" evidence="3">
    <location>
        <begin position="25"/>
        <end position="358"/>
    </location>
</feature>
<feature type="transmembrane region" description="Helical" evidence="3">
    <location>
        <begin position="359"/>
        <end position="379"/>
    </location>
</feature>
<feature type="topological domain" description="Cytoplasmic" evidence="3">
    <location>
        <begin position="380"/>
        <end position="769"/>
    </location>
</feature>
<feature type="domain" description="Protein kinase" evidence="4">
    <location>
        <begin position="433"/>
        <end position="718"/>
    </location>
</feature>
<feature type="region of interest" description="Atypical EGF-like">
    <location>
        <begin position="291"/>
        <end position="351"/>
    </location>
</feature>
<feature type="active site" description="Proton acceptor" evidence="4 5">
    <location>
        <position position="559"/>
    </location>
</feature>
<feature type="binding site" evidence="4">
    <location>
        <begin position="439"/>
        <end position="447"/>
    </location>
    <ligand>
        <name>ATP</name>
        <dbReference type="ChEBI" id="CHEBI:30616"/>
    </ligand>
</feature>
<feature type="binding site" evidence="4">
    <location>
        <position position="461"/>
    </location>
    <ligand>
        <name>ATP</name>
        <dbReference type="ChEBI" id="CHEBI:30616"/>
    </ligand>
</feature>
<feature type="modified residue" description="Phosphotyrosine" evidence="2">
    <location>
        <position position="506"/>
    </location>
</feature>
<feature type="modified residue" description="Phosphothreonine" evidence="2">
    <location>
        <position position="593"/>
    </location>
</feature>
<feature type="modified residue" description="Phosphothreonine" evidence="2">
    <location>
        <position position="598"/>
    </location>
</feature>
<feature type="modified residue" description="Phosphotyrosine" evidence="2">
    <location>
        <position position="606"/>
    </location>
</feature>
<feature type="glycosylation site" description="N-linked (GlcNAc...) asparagine" evidence="3">
    <location>
        <position position="58"/>
    </location>
</feature>
<feature type="glycosylation site" description="N-linked (GlcNAc...) asparagine" evidence="3">
    <location>
        <position position="114"/>
    </location>
</feature>
<feature type="glycosylation site" description="N-linked (GlcNAc...) asparagine" evidence="3">
    <location>
        <position position="134"/>
    </location>
</feature>
<feature type="glycosylation site" description="N-linked (GlcNAc...) asparagine" evidence="3">
    <location>
        <position position="182"/>
    </location>
</feature>
<feature type="glycosylation site" description="N-linked (GlcNAc...) asparagine" evidence="3">
    <location>
        <position position="187"/>
    </location>
</feature>
<feature type="glycosylation site" description="N-linked (GlcNAc...) asparagine" evidence="3">
    <location>
        <position position="237"/>
    </location>
</feature>
<feature type="glycosylation site" description="N-linked (GlcNAc...) asparagine" evidence="3">
    <location>
        <position position="262"/>
    </location>
</feature>
<feature type="glycosylation site" description="N-linked (GlcNAc...) asparagine" evidence="3">
    <location>
        <position position="296"/>
    </location>
</feature>
<feature type="disulfide bond" evidence="1">
    <location>
        <begin position="293"/>
        <end position="305"/>
    </location>
</feature>
<feature type="disulfide bond" evidence="1">
    <location>
        <begin position="327"/>
        <end position="342"/>
    </location>
</feature>
<feature type="disulfide bond" evidence="1">
    <location>
        <begin position="337"/>
        <end position="351"/>
    </location>
</feature>
<reference key="1">
    <citation type="journal article" date="2000" name="Nature">
        <title>Sequence and analysis of chromosome 1 of the plant Arabidopsis thaliana.</title>
        <authorList>
            <person name="Theologis A."/>
            <person name="Ecker J.R."/>
            <person name="Palm C.J."/>
            <person name="Federspiel N.A."/>
            <person name="Kaul S."/>
            <person name="White O."/>
            <person name="Alonso J."/>
            <person name="Altafi H."/>
            <person name="Araujo R."/>
            <person name="Bowman C.L."/>
            <person name="Brooks S.Y."/>
            <person name="Buehler E."/>
            <person name="Chan A."/>
            <person name="Chao Q."/>
            <person name="Chen H."/>
            <person name="Cheuk R.F."/>
            <person name="Chin C.W."/>
            <person name="Chung M.K."/>
            <person name="Conn L."/>
            <person name="Conway A.B."/>
            <person name="Conway A.R."/>
            <person name="Creasy T.H."/>
            <person name="Dewar K."/>
            <person name="Dunn P."/>
            <person name="Etgu P."/>
            <person name="Feldblyum T.V."/>
            <person name="Feng J.-D."/>
            <person name="Fong B."/>
            <person name="Fujii C.Y."/>
            <person name="Gill J.E."/>
            <person name="Goldsmith A.D."/>
            <person name="Haas B."/>
            <person name="Hansen N.F."/>
            <person name="Hughes B."/>
            <person name="Huizar L."/>
            <person name="Hunter J.L."/>
            <person name="Jenkins J."/>
            <person name="Johnson-Hopson C."/>
            <person name="Khan S."/>
            <person name="Khaykin E."/>
            <person name="Kim C.J."/>
            <person name="Koo H.L."/>
            <person name="Kremenetskaia I."/>
            <person name="Kurtz D.B."/>
            <person name="Kwan A."/>
            <person name="Lam B."/>
            <person name="Langin-Hooper S."/>
            <person name="Lee A."/>
            <person name="Lee J.M."/>
            <person name="Lenz C.A."/>
            <person name="Li J.H."/>
            <person name="Li Y.-P."/>
            <person name="Lin X."/>
            <person name="Liu S.X."/>
            <person name="Liu Z.A."/>
            <person name="Luros J.S."/>
            <person name="Maiti R."/>
            <person name="Marziali A."/>
            <person name="Militscher J."/>
            <person name="Miranda M."/>
            <person name="Nguyen M."/>
            <person name="Nierman W.C."/>
            <person name="Osborne B.I."/>
            <person name="Pai G."/>
            <person name="Peterson J."/>
            <person name="Pham P.K."/>
            <person name="Rizzo M."/>
            <person name="Rooney T."/>
            <person name="Rowley D."/>
            <person name="Sakano H."/>
            <person name="Salzberg S.L."/>
            <person name="Schwartz J.R."/>
            <person name="Shinn P."/>
            <person name="Southwick A.M."/>
            <person name="Sun H."/>
            <person name="Tallon L.J."/>
            <person name="Tambunga G."/>
            <person name="Toriumi M.J."/>
            <person name="Town C.D."/>
            <person name="Utterback T."/>
            <person name="Van Aken S."/>
            <person name="Vaysberg M."/>
            <person name="Vysotskaia V.S."/>
            <person name="Walker M."/>
            <person name="Wu D."/>
            <person name="Yu G."/>
            <person name="Fraser C.M."/>
            <person name="Venter J.C."/>
            <person name="Davis R.W."/>
        </authorList>
    </citation>
    <scope>NUCLEOTIDE SEQUENCE [LARGE SCALE GENOMIC DNA]</scope>
    <source>
        <strain>cv. Columbia</strain>
    </source>
</reference>
<reference key="2">
    <citation type="journal article" date="2017" name="Plant J.">
        <title>Araport11: a complete reannotation of the Arabidopsis thaliana reference genome.</title>
        <authorList>
            <person name="Cheng C.Y."/>
            <person name="Krishnakumar V."/>
            <person name="Chan A.P."/>
            <person name="Thibaud-Nissen F."/>
            <person name="Schobel S."/>
            <person name="Town C.D."/>
        </authorList>
    </citation>
    <scope>GENOME REANNOTATION</scope>
    <source>
        <strain>cv. Columbia</strain>
    </source>
</reference>
<reference key="3">
    <citation type="journal article" date="2003" name="Science">
        <title>Empirical analysis of transcriptional activity in the Arabidopsis genome.</title>
        <authorList>
            <person name="Yamada K."/>
            <person name="Lim J."/>
            <person name="Dale J.M."/>
            <person name="Chen H."/>
            <person name="Shinn P."/>
            <person name="Palm C.J."/>
            <person name="Southwick A.M."/>
            <person name="Wu H.C."/>
            <person name="Kim C.J."/>
            <person name="Nguyen M."/>
            <person name="Pham P.K."/>
            <person name="Cheuk R.F."/>
            <person name="Karlin-Newmann G."/>
            <person name="Liu S.X."/>
            <person name="Lam B."/>
            <person name="Sakano H."/>
            <person name="Wu T."/>
            <person name="Yu G."/>
            <person name="Miranda M."/>
            <person name="Quach H.L."/>
            <person name="Tripp M."/>
            <person name="Chang C.H."/>
            <person name="Lee J.M."/>
            <person name="Toriumi M.J."/>
            <person name="Chan M.M."/>
            <person name="Tang C.C."/>
            <person name="Onodera C.S."/>
            <person name="Deng J.M."/>
            <person name="Akiyama K."/>
            <person name="Ansari Y."/>
            <person name="Arakawa T."/>
            <person name="Banh J."/>
            <person name="Banno F."/>
            <person name="Bowser L."/>
            <person name="Brooks S.Y."/>
            <person name="Carninci P."/>
            <person name="Chao Q."/>
            <person name="Choy N."/>
            <person name="Enju A."/>
            <person name="Goldsmith A.D."/>
            <person name="Gurjal M."/>
            <person name="Hansen N.F."/>
            <person name="Hayashizaki Y."/>
            <person name="Johnson-Hopson C."/>
            <person name="Hsuan V.W."/>
            <person name="Iida K."/>
            <person name="Karnes M."/>
            <person name="Khan S."/>
            <person name="Koesema E."/>
            <person name="Ishida J."/>
            <person name="Jiang P.X."/>
            <person name="Jones T."/>
            <person name="Kawai J."/>
            <person name="Kamiya A."/>
            <person name="Meyers C."/>
            <person name="Nakajima M."/>
            <person name="Narusaka M."/>
            <person name="Seki M."/>
            <person name="Sakurai T."/>
            <person name="Satou M."/>
            <person name="Tamse R."/>
            <person name="Vaysberg M."/>
            <person name="Wallender E.K."/>
            <person name="Wong C."/>
            <person name="Yamamura Y."/>
            <person name="Yuan S."/>
            <person name="Shinozaki K."/>
            <person name="Davis R.W."/>
            <person name="Theologis A."/>
            <person name="Ecker J.R."/>
        </authorList>
    </citation>
    <scope>NUCLEOTIDE SEQUENCE [LARGE SCALE MRNA]</scope>
    <source>
        <strain>cv. Columbia</strain>
    </source>
</reference>
<reference key="4">
    <citation type="journal article" date="2002" name="Plant Physiol.">
        <title>The cell wall-associated kinase (WAK) and WAK-like kinase gene family.</title>
        <authorList>
            <person name="Verica J.A."/>
            <person name="He Z.-H."/>
        </authorList>
    </citation>
    <scope>GENE FAMILY ORGANIZATION</scope>
</reference>
<dbReference type="EC" id="2.7.11.-"/>
<dbReference type="EMBL" id="AC010793">
    <property type="protein sequence ID" value="AAF68122.1"/>
    <property type="status" value="ALT_SEQ"/>
    <property type="molecule type" value="Genomic_DNA"/>
</dbReference>
<dbReference type="EMBL" id="CP002684">
    <property type="protein sequence ID" value="AEE36286.1"/>
    <property type="molecule type" value="Genomic_DNA"/>
</dbReference>
<dbReference type="EMBL" id="AY072320">
    <property type="protein sequence ID" value="AAL61927.1"/>
    <property type="molecule type" value="mRNA"/>
</dbReference>
<dbReference type="EMBL" id="AY128732">
    <property type="protein sequence ID" value="AAM91132.1"/>
    <property type="molecule type" value="mRNA"/>
</dbReference>
<dbReference type="PIR" id="G96827">
    <property type="entry name" value="G96827"/>
</dbReference>
<dbReference type="RefSeq" id="NP_178086.1">
    <property type="nucleotide sequence ID" value="NM_106617.4"/>
</dbReference>
<dbReference type="SMR" id="Q8VYA3"/>
<dbReference type="BioGRID" id="29525">
    <property type="interactions" value="6"/>
</dbReference>
<dbReference type="FunCoup" id="Q8VYA3">
    <property type="interactions" value="14"/>
</dbReference>
<dbReference type="IntAct" id="Q8VYA3">
    <property type="interactions" value="6"/>
</dbReference>
<dbReference type="STRING" id="3702.Q8VYA3"/>
<dbReference type="GlyCosmos" id="Q8VYA3">
    <property type="glycosylation" value="8 sites, No reported glycans"/>
</dbReference>
<dbReference type="GlyGen" id="Q8VYA3">
    <property type="glycosylation" value="9 sites"/>
</dbReference>
<dbReference type="PaxDb" id="3702-AT1G79680.1"/>
<dbReference type="ProteomicsDB" id="242716"/>
<dbReference type="EnsemblPlants" id="AT1G79680.1">
    <property type="protein sequence ID" value="AT1G79680.1"/>
    <property type="gene ID" value="AT1G79680"/>
</dbReference>
<dbReference type="GeneID" id="844307"/>
<dbReference type="Gramene" id="AT1G79680.1">
    <property type="protein sequence ID" value="AT1G79680.1"/>
    <property type="gene ID" value="AT1G79680"/>
</dbReference>
<dbReference type="KEGG" id="ath:AT1G79680"/>
<dbReference type="Araport" id="AT1G79680"/>
<dbReference type="TAIR" id="AT1G79680">
    <property type="gene designation" value="WAKL10"/>
</dbReference>
<dbReference type="eggNOG" id="ENOG502RMXX">
    <property type="taxonomic scope" value="Eukaryota"/>
</dbReference>
<dbReference type="HOGENOM" id="CLU_000288_43_5_1"/>
<dbReference type="InParanoid" id="Q8VYA3"/>
<dbReference type="OMA" id="RDWFEIN"/>
<dbReference type="PhylomeDB" id="Q8VYA3"/>
<dbReference type="PRO" id="PR:Q8VYA3"/>
<dbReference type="Proteomes" id="UP000006548">
    <property type="component" value="Chromosome 1"/>
</dbReference>
<dbReference type="ExpressionAtlas" id="Q8VYA3">
    <property type="expression patterns" value="baseline and differential"/>
</dbReference>
<dbReference type="GO" id="GO:0016020">
    <property type="term" value="C:membrane"/>
    <property type="evidence" value="ECO:0007669"/>
    <property type="project" value="UniProtKB-SubCell"/>
</dbReference>
<dbReference type="GO" id="GO:0005524">
    <property type="term" value="F:ATP binding"/>
    <property type="evidence" value="ECO:0007669"/>
    <property type="project" value="UniProtKB-KW"/>
</dbReference>
<dbReference type="GO" id="GO:0005509">
    <property type="term" value="F:calcium ion binding"/>
    <property type="evidence" value="ECO:0007669"/>
    <property type="project" value="InterPro"/>
</dbReference>
<dbReference type="GO" id="GO:0004383">
    <property type="term" value="F:guanylate cyclase activity"/>
    <property type="evidence" value="ECO:0000314"/>
    <property type="project" value="TAIR"/>
</dbReference>
<dbReference type="GO" id="GO:0030247">
    <property type="term" value="F:polysaccharide binding"/>
    <property type="evidence" value="ECO:0007669"/>
    <property type="project" value="InterPro"/>
</dbReference>
<dbReference type="GO" id="GO:0106310">
    <property type="term" value="F:protein serine kinase activity"/>
    <property type="evidence" value="ECO:0007669"/>
    <property type="project" value="RHEA"/>
</dbReference>
<dbReference type="GO" id="GO:0004674">
    <property type="term" value="F:protein serine/threonine kinase activity"/>
    <property type="evidence" value="ECO:0007669"/>
    <property type="project" value="UniProtKB-KW"/>
</dbReference>
<dbReference type="GO" id="GO:0007166">
    <property type="term" value="P:cell surface receptor signaling pathway"/>
    <property type="evidence" value="ECO:0007669"/>
    <property type="project" value="InterPro"/>
</dbReference>
<dbReference type="GO" id="GO:0006952">
    <property type="term" value="P:defense response"/>
    <property type="evidence" value="ECO:0000270"/>
    <property type="project" value="TAIR"/>
</dbReference>
<dbReference type="GO" id="GO:0009617">
    <property type="term" value="P:response to bacterium"/>
    <property type="evidence" value="ECO:0000270"/>
    <property type="project" value="TAIR"/>
</dbReference>
<dbReference type="GO" id="GO:0009620">
    <property type="term" value="P:response to fungus"/>
    <property type="evidence" value="ECO:0000270"/>
    <property type="project" value="TAIR"/>
</dbReference>
<dbReference type="GO" id="GO:0009751">
    <property type="term" value="P:response to salicylic acid"/>
    <property type="evidence" value="ECO:0000270"/>
    <property type="project" value="TAIR"/>
</dbReference>
<dbReference type="CDD" id="cd00054">
    <property type="entry name" value="EGF_CA"/>
    <property type="match status" value="1"/>
</dbReference>
<dbReference type="CDD" id="cd14066">
    <property type="entry name" value="STKc_IRAK"/>
    <property type="match status" value="1"/>
</dbReference>
<dbReference type="FunFam" id="1.10.510.10:FF:000084">
    <property type="entry name" value="Wall-associated receptor kinase 2"/>
    <property type="match status" value="1"/>
</dbReference>
<dbReference type="FunFam" id="3.30.200.20:FF:000043">
    <property type="entry name" value="Wall-associated receptor kinase 2"/>
    <property type="match status" value="1"/>
</dbReference>
<dbReference type="Gene3D" id="2.10.25.10">
    <property type="entry name" value="Laminin"/>
    <property type="match status" value="1"/>
</dbReference>
<dbReference type="Gene3D" id="3.30.200.20">
    <property type="entry name" value="Phosphorylase Kinase, domain 1"/>
    <property type="match status" value="1"/>
</dbReference>
<dbReference type="Gene3D" id="1.10.510.10">
    <property type="entry name" value="Transferase(Phosphotransferase) domain 1"/>
    <property type="match status" value="1"/>
</dbReference>
<dbReference type="InterPro" id="IPR018097">
    <property type="entry name" value="EGF_Ca-bd_CS"/>
</dbReference>
<dbReference type="InterPro" id="IPR011009">
    <property type="entry name" value="Kinase-like_dom_sf"/>
</dbReference>
<dbReference type="InterPro" id="IPR000719">
    <property type="entry name" value="Prot_kinase_dom"/>
</dbReference>
<dbReference type="InterPro" id="IPR008271">
    <property type="entry name" value="Ser/Thr_kinase_AS"/>
</dbReference>
<dbReference type="InterPro" id="IPR013695">
    <property type="entry name" value="WAK"/>
</dbReference>
<dbReference type="InterPro" id="IPR045274">
    <property type="entry name" value="WAK-like"/>
</dbReference>
<dbReference type="InterPro" id="IPR025287">
    <property type="entry name" value="WAK_GUB"/>
</dbReference>
<dbReference type="PANTHER" id="PTHR27005:SF515">
    <property type="entry name" value="WALL-ASSOCIATED RECEPTOR KINASE-LIKE 10-RELATED"/>
    <property type="match status" value="1"/>
</dbReference>
<dbReference type="PANTHER" id="PTHR27005">
    <property type="entry name" value="WALL-ASSOCIATED RECEPTOR KINASE-LIKE 21"/>
    <property type="match status" value="1"/>
</dbReference>
<dbReference type="Pfam" id="PF13947">
    <property type="entry name" value="GUB_WAK_bind"/>
    <property type="match status" value="1"/>
</dbReference>
<dbReference type="Pfam" id="PF00069">
    <property type="entry name" value="Pkinase"/>
    <property type="match status" value="1"/>
</dbReference>
<dbReference type="Pfam" id="PF08488">
    <property type="entry name" value="WAK"/>
    <property type="match status" value="1"/>
</dbReference>
<dbReference type="SMART" id="SM00220">
    <property type="entry name" value="S_TKc"/>
    <property type="match status" value="1"/>
</dbReference>
<dbReference type="SUPFAM" id="SSF56112">
    <property type="entry name" value="Protein kinase-like (PK-like)"/>
    <property type="match status" value="1"/>
</dbReference>
<dbReference type="PROSITE" id="PS01187">
    <property type="entry name" value="EGF_CA"/>
    <property type="match status" value="1"/>
</dbReference>
<dbReference type="PROSITE" id="PS50011">
    <property type="entry name" value="PROTEIN_KINASE_DOM"/>
    <property type="match status" value="1"/>
</dbReference>
<dbReference type="PROSITE" id="PS00108">
    <property type="entry name" value="PROTEIN_KINASE_ST"/>
    <property type="match status" value="1"/>
</dbReference>
<proteinExistence type="evidence at transcript level"/>
<name>WAKLJ_ARATH</name>
<protein>
    <recommendedName>
        <fullName>Wall-associated receptor kinase-like 10</fullName>
        <ecNumber>2.7.11.-</ecNumber>
    </recommendedName>
</protein>
<evidence type="ECO:0000250" key="1"/>
<evidence type="ECO:0000250" key="2">
    <source>
        <dbReference type="UniProtKB" id="O48814"/>
    </source>
</evidence>
<evidence type="ECO:0000255" key="3"/>
<evidence type="ECO:0000255" key="4">
    <source>
        <dbReference type="PROSITE-ProRule" id="PRU00159"/>
    </source>
</evidence>
<evidence type="ECO:0000255" key="5">
    <source>
        <dbReference type="PROSITE-ProRule" id="PRU10027"/>
    </source>
</evidence>
<evidence type="ECO:0000305" key="6"/>